<proteinExistence type="inferred from homology"/>
<keyword id="KW-0963">Cytoplasm</keyword>
<keyword id="KW-0489">Methyltransferase</keyword>
<keyword id="KW-0949">S-adenosyl-L-methionine</keyword>
<keyword id="KW-0808">Transferase</keyword>
<name>PIMT_METM6</name>
<accession>A9A8I9</accession>
<reference key="1">
    <citation type="submission" date="2007-10" db="EMBL/GenBank/DDBJ databases">
        <title>Complete sequence of Methanococcus maripaludis C6.</title>
        <authorList>
            <consortium name="US DOE Joint Genome Institute"/>
            <person name="Copeland A."/>
            <person name="Lucas S."/>
            <person name="Lapidus A."/>
            <person name="Barry K."/>
            <person name="Glavina del Rio T."/>
            <person name="Dalin E."/>
            <person name="Tice H."/>
            <person name="Pitluck S."/>
            <person name="Clum A."/>
            <person name="Schmutz J."/>
            <person name="Larimer F."/>
            <person name="Land M."/>
            <person name="Hauser L."/>
            <person name="Kyrpides N."/>
            <person name="Mikhailova N."/>
            <person name="Sieprawska-Lupa M."/>
            <person name="Whitman W.B."/>
            <person name="Richardson P."/>
        </authorList>
    </citation>
    <scope>NUCLEOTIDE SEQUENCE [LARGE SCALE GENOMIC DNA]</scope>
    <source>
        <strain>C6 / ATCC BAA-1332</strain>
    </source>
</reference>
<evidence type="ECO:0000255" key="1">
    <source>
        <dbReference type="HAMAP-Rule" id="MF_00090"/>
    </source>
</evidence>
<comment type="function">
    <text evidence="1">Catalyzes the methyl esterification of L-isoaspartyl residues in peptides and proteins that result from spontaneous decomposition of normal L-aspartyl and L-asparaginyl residues. It plays a role in the repair and/or degradation of damaged proteins.</text>
</comment>
<comment type="catalytic activity">
    <reaction evidence="1">
        <text>[protein]-L-isoaspartate + S-adenosyl-L-methionine = [protein]-L-isoaspartate alpha-methyl ester + S-adenosyl-L-homocysteine</text>
        <dbReference type="Rhea" id="RHEA:12705"/>
        <dbReference type="Rhea" id="RHEA-COMP:12143"/>
        <dbReference type="Rhea" id="RHEA-COMP:12144"/>
        <dbReference type="ChEBI" id="CHEBI:57856"/>
        <dbReference type="ChEBI" id="CHEBI:59789"/>
        <dbReference type="ChEBI" id="CHEBI:90596"/>
        <dbReference type="ChEBI" id="CHEBI:90598"/>
        <dbReference type="EC" id="2.1.1.77"/>
    </reaction>
</comment>
<comment type="subcellular location">
    <subcellularLocation>
        <location evidence="1">Cytoplasm</location>
    </subcellularLocation>
</comment>
<comment type="similarity">
    <text evidence="1">Belongs to the methyltransferase superfamily. L-isoaspartyl/D-aspartyl protein methyltransferase family.</text>
</comment>
<feature type="chain" id="PRO_1000093260" description="Protein-L-isoaspartate O-methyltransferase">
    <location>
        <begin position="1"/>
        <end position="212"/>
    </location>
</feature>
<feature type="active site" evidence="1">
    <location>
        <position position="60"/>
    </location>
</feature>
<organism>
    <name type="scientific">Methanococcus maripaludis (strain C6 / ATCC BAA-1332)</name>
    <dbReference type="NCBI Taxonomy" id="444158"/>
    <lineage>
        <taxon>Archaea</taxon>
        <taxon>Methanobacteriati</taxon>
        <taxon>Methanobacteriota</taxon>
        <taxon>Methanomada group</taxon>
        <taxon>Methanococci</taxon>
        <taxon>Methanococcales</taxon>
        <taxon>Methanococcaceae</taxon>
        <taxon>Methanococcus</taxon>
    </lineage>
</organism>
<gene>
    <name evidence="1" type="primary">pcm</name>
    <name type="ordered locus">MmarC6_0845</name>
</gene>
<protein>
    <recommendedName>
        <fullName evidence="1">Protein-L-isoaspartate O-methyltransferase</fullName>
        <ecNumber evidence="1">2.1.1.77</ecNumber>
    </recommendedName>
    <alternativeName>
        <fullName evidence="1">L-isoaspartyl protein carboxyl methyltransferase</fullName>
    </alternativeName>
    <alternativeName>
        <fullName evidence="1">Protein L-isoaspartyl methyltransferase</fullName>
    </alternativeName>
    <alternativeName>
        <fullName evidence="1">Protein-beta-aspartate methyltransferase</fullName>
        <shortName evidence="1">PIMT</shortName>
    </alternativeName>
</protein>
<sequence>MPLNEIVGVVGNLISKGYIKKQSVIDALMSVPRHKFLPKNMEEYAYIDSPLGIGCGQTISAIHMVGIMCEELDLNMGQNVLEVGTGSGYQAAVVSKIVGESGKVTTVERIPELFEKSKQVLSELGYENVEAVLGDGTLGYLENSPYDRIYVTASGPNVPKALFEQLNDGGIILAPVGSHFQTLMRYKKTNGKIYEEKLLEVAFVPLIGENGF</sequence>
<dbReference type="EC" id="2.1.1.77" evidence="1"/>
<dbReference type="EMBL" id="CP000867">
    <property type="protein sequence ID" value="ABX01662.1"/>
    <property type="molecule type" value="Genomic_DNA"/>
</dbReference>
<dbReference type="SMR" id="A9A8I9"/>
<dbReference type="STRING" id="444158.MmarC6_0845"/>
<dbReference type="KEGG" id="mmx:MmarC6_0845"/>
<dbReference type="eggNOG" id="arCOG00976">
    <property type="taxonomic scope" value="Archaea"/>
</dbReference>
<dbReference type="HOGENOM" id="CLU_055432_2_0_2"/>
<dbReference type="OrthoDB" id="33618at2157"/>
<dbReference type="PhylomeDB" id="A9A8I9"/>
<dbReference type="GO" id="GO:0005737">
    <property type="term" value="C:cytoplasm"/>
    <property type="evidence" value="ECO:0007669"/>
    <property type="project" value="UniProtKB-SubCell"/>
</dbReference>
<dbReference type="GO" id="GO:0004719">
    <property type="term" value="F:protein-L-isoaspartate (D-aspartate) O-methyltransferase activity"/>
    <property type="evidence" value="ECO:0007669"/>
    <property type="project" value="UniProtKB-UniRule"/>
</dbReference>
<dbReference type="GO" id="GO:0032259">
    <property type="term" value="P:methylation"/>
    <property type="evidence" value="ECO:0007669"/>
    <property type="project" value="UniProtKB-KW"/>
</dbReference>
<dbReference type="GO" id="GO:0036211">
    <property type="term" value="P:protein modification process"/>
    <property type="evidence" value="ECO:0007669"/>
    <property type="project" value="UniProtKB-UniRule"/>
</dbReference>
<dbReference type="GO" id="GO:0030091">
    <property type="term" value="P:protein repair"/>
    <property type="evidence" value="ECO:0007669"/>
    <property type="project" value="UniProtKB-UniRule"/>
</dbReference>
<dbReference type="CDD" id="cd02440">
    <property type="entry name" value="AdoMet_MTases"/>
    <property type="match status" value="1"/>
</dbReference>
<dbReference type="FunFam" id="3.40.50.150:FF:000010">
    <property type="entry name" value="Protein-L-isoaspartate O-methyltransferase"/>
    <property type="match status" value="1"/>
</dbReference>
<dbReference type="Gene3D" id="3.40.50.150">
    <property type="entry name" value="Vaccinia Virus protein VP39"/>
    <property type="match status" value="1"/>
</dbReference>
<dbReference type="HAMAP" id="MF_00090">
    <property type="entry name" value="PIMT"/>
    <property type="match status" value="1"/>
</dbReference>
<dbReference type="InterPro" id="IPR000682">
    <property type="entry name" value="PCMT"/>
</dbReference>
<dbReference type="InterPro" id="IPR029063">
    <property type="entry name" value="SAM-dependent_MTases_sf"/>
</dbReference>
<dbReference type="NCBIfam" id="TIGR00080">
    <property type="entry name" value="pimt"/>
    <property type="match status" value="1"/>
</dbReference>
<dbReference type="NCBIfam" id="NF001453">
    <property type="entry name" value="PRK00312.1"/>
    <property type="match status" value="1"/>
</dbReference>
<dbReference type="NCBIfam" id="NF010549">
    <property type="entry name" value="PRK13942.1"/>
    <property type="match status" value="1"/>
</dbReference>
<dbReference type="PANTHER" id="PTHR11579">
    <property type="entry name" value="PROTEIN-L-ISOASPARTATE O-METHYLTRANSFERASE"/>
    <property type="match status" value="1"/>
</dbReference>
<dbReference type="PANTHER" id="PTHR11579:SF0">
    <property type="entry name" value="PROTEIN-L-ISOASPARTATE(D-ASPARTATE) O-METHYLTRANSFERASE"/>
    <property type="match status" value="1"/>
</dbReference>
<dbReference type="Pfam" id="PF01135">
    <property type="entry name" value="PCMT"/>
    <property type="match status" value="1"/>
</dbReference>
<dbReference type="SUPFAM" id="SSF53335">
    <property type="entry name" value="S-adenosyl-L-methionine-dependent methyltransferases"/>
    <property type="match status" value="1"/>
</dbReference>
<dbReference type="PROSITE" id="PS01279">
    <property type="entry name" value="PCMT"/>
    <property type="match status" value="1"/>
</dbReference>